<dbReference type="EMBL" id="AY454124">
    <property type="protein sequence ID" value="AAS45167.1"/>
    <property type="molecule type" value="mRNA"/>
</dbReference>
<dbReference type="CCDS" id="CCDS38055.1"/>
<dbReference type="RefSeq" id="NP_082004.1">
    <property type="nucleotide sequence ID" value="NM_027728.2"/>
</dbReference>
<dbReference type="PDB" id="8I7O">
    <property type="method" value="EM"/>
    <property type="resolution" value="4.50 A"/>
    <property type="chains" value="L2/L3=1-255"/>
</dbReference>
<dbReference type="PDB" id="8I7R">
    <property type="method" value="EM"/>
    <property type="resolution" value="6.50 A"/>
    <property type="chains" value="L1/L2/L3/L4=1-255"/>
</dbReference>
<dbReference type="PDB" id="8IYJ">
    <property type="method" value="EM"/>
    <property type="resolution" value="3.50 A"/>
    <property type="chains" value="h/i/j/k=1-255"/>
</dbReference>
<dbReference type="PDB" id="8TO0">
    <property type="method" value="EM"/>
    <property type="resolution" value="7.70 A"/>
    <property type="chains" value="B5/CK/CZ/Cp=1-255"/>
</dbReference>
<dbReference type="PDBsum" id="8I7O"/>
<dbReference type="PDBsum" id="8I7R"/>
<dbReference type="PDBsum" id="8IYJ"/>
<dbReference type="PDBsum" id="8TO0"/>
<dbReference type="EMDB" id="EMD-35229"/>
<dbReference type="EMDB" id="EMD-35230"/>
<dbReference type="EMDB" id="EMD-35823"/>
<dbReference type="EMDB" id="EMD-41431"/>
<dbReference type="SMR" id="Q6SP97"/>
<dbReference type="BioGRID" id="214568">
    <property type="interactions" value="3"/>
</dbReference>
<dbReference type="FunCoup" id="Q6SP97">
    <property type="interactions" value="145"/>
</dbReference>
<dbReference type="STRING" id="10090.ENSMUSP00000027992"/>
<dbReference type="PhosphoSitePlus" id="Q6SP97"/>
<dbReference type="PaxDb" id="10090-ENSMUSP00000027992"/>
<dbReference type="ProteomicsDB" id="275864"/>
<dbReference type="Antibodypedia" id="25866">
    <property type="antibodies" value="234 antibodies from 20 providers"/>
</dbReference>
<dbReference type="Ensembl" id="ENSMUST00000027992.3">
    <property type="protein sequence ID" value="ENSMUSP00000027992.3"/>
    <property type="gene ID" value="ENSMUSG00000026679.4"/>
</dbReference>
<dbReference type="GeneID" id="71233"/>
<dbReference type="KEGG" id="mmu:71233"/>
<dbReference type="UCSC" id="uc008ina.1">
    <property type="organism name" value="mouse"/>
</dbReference>
<dbReference type="AGR" id="MGI:1918483"/>
<dbReference type="CTD" id="219670"/>
<dbReference type="MGI" id="MGI:1918483">
    <property type="gene designation" value="Enkur"/>
</dbReference>
<dbReference type="VEuPathDB" id="HostDB:ENSMUSG00000026679"/>
<dbReference type="eggNOG" id="ENOG502QT8E">
    <property type="taxonomic scope" value="Eukaryota"/>
</dbReference>
<dbReference type="GeneTree" id="ENSGT00940000153866"/>
<dbReference type="HOGENOM" id="CLU_088051_1_0_1"/>
<dbReference type="InParanoid" id="Q6SP97"/>
<dbReference type="OMA" id="HRVIYIA"/>
<dbReference type="OrthoDB" id="2123594at2759"/>
<dbReference type="PhylomeDB" id="Q6SP97"/>
<dbReference type="TreeFam" id="TF323892"/>
<dbReference type="BioGRID-ORCS" id="71233">
    <property type="hits" value="2 hits in 78 CRISPR screens"/>
</dbReference>
<dbReference type="PRO" id="PR:Q6SP97"/>
<dbReference type="Proteomes" id="UP000000589">
    <property type="component" value="Chromosome 2"/>
</dbReference>
<dbReference type="RNAct" id="Q6SP97">
    <property type="molecule type" value="protein"/>
</dbReference>
<dbReference type="Bgee" id="ENSMUSG00000026679">
    <property type="expression patterns" value="Expressed in seminiferous tubule of testis and 96 other cell types or tissues"/>
</dbReference>
<dbReference type="ExpressionAtlas" id="Q6SP97">
    <property type="expression patterns" value="baseline and differential"/>
</dbReference>
<dbReference type="GO" id="GO:0097728">
    <property type="term" value="C:9+0 motile cilium"/>
    <property type="evidence" value="ECO:0000314"/>
    <property type="project" value="MGI"/>
</dbReference>
<dbReference type="GO" id="GO:0097729">
    <property type="term" value="C:9+2 motile cilium"/>
    <property type="evidence" value="ECO:0000314"/>
    <property type="project" value="MGI"/>
</dbReference>
<dbReference type="GO" id="GO:0001669">
    <property type="term" value="C:acrosomal vesicle"/>
    <property type="evidence" value="ECO:0000314"/>
    <property type="project" value="MGI"/>
</dbReference>
<dbReference type="GO" id="GO:0160112">
    <property type="term" value="C:axonemal B tubule inner sheath"/>
    <property type="evidence" value="ECO:0000314"/>
    <property type="project" value="UniProtKB"/>
</dbReference>
<dbReference type="GO" id="GO:0005879">
    <property type="term" value="C:axonemal microtubule"/>
    <property type="evidence" value="ECO:0000250"/>
    <property type="project" value="UniProtKB"/>
</dbReference>
<dbReference type="GO" id="GO:0036126">
    <property type="term" value="C:sperm flagellum"/>
    <property type="evidence" value="ECO:0000314"/>
    <property type="project" value="UniProtKB"/>
</dbReference>
<dbReference type="GO" id="GO:0097228">
    <property type="term" value="C:sperm principal piece"/>
    <property type="evidence" value="ECO:0000314"/>
    <property type="project" value="MGI"/>
</dbReference>
<dbReference type="GO" id="GO:0005516">
    <property type="term" value="F:calmodulin binding"/>
    <property type="evidence" value="ECO:0000314"/>
    <property type="project" value="MGI"/>
</dbReference>
<dbReference type="GO" id="GO:0017124">
    <property type="term" value="F:SH3 domain binding"/>
    <property type="evidence" value="ECO:0007669"/>
    <property type="project" value="UniProtKB-KW"/>
</dbReference>
<dbReference type="GO" id="GO:0061966">
    <property type="term" value="P:establishment of left/right asymmetry"/>
    <property type="evidence" value="ECO:0000315"/>
    <property type="project" value="MGI"/>
</dbReference>
<dbReference type="GO" id="GO:0030317">
    <property type="term" value="P:flagellated sperm motility"/>
    <property type="evidence" value="ECO:0000314"/>
    <property type="project" value="UniProtKB"/>
</dbReference>
<dbReference type="InterPro" id="IPR027012">
    <property type="entry name" value="Enkurin_dom"/>
</dbReference>
<dbReference type="InterPro" id="IPR052102">
    <property type="entry name" value="Enkurin_domain-protein"/>
</dbReference>
<dbReference type="PANTHER" id="PTHR21490:SF0">
    <property type="entry name" value="ENKURIN"/>
    <property type="match status" value="1"/>
</dbReference>
<dbReference type="PANTHER" id="PTHR21490">
    <property type="entry name" value="ENKURIN-RELATED"/>
    <property type="match status" value="1"/>
</dbReference>
<dbReference type="Pfam" id="PF13864">
    <property type="entry name" value="Enkurin"/>
    <property type="match status" value="1"/>
</dbReference>
<dbReference type="PROSITE" id="PS51665">
    <property type="entry name" value="ENKURIN"/>
    <property type="match status" value="1"/>
</dbReference>
<name>ENKUR_MOUSE</name>
<comment type="function">
    <text evidence="6 7 8 9">Adapter that functions to localize a calcium-sensitive signal transduction machinery in sperm to a calcium-permeable ion channel (PubMed:15385169). Microtubule inner protein (MIP) part of the dynein-decorated doublet microtubules (DMTs) in cilia axoneme, which is required for motile cilia beating (PubMed:37295417, PubMed:37865089, PubMed:37989994).</text>
</comment>
<comment type="subunit">
    <text evidence="2 6 7 8 9">Microtubule inner protein component of sperm flagellar doublet microtubules (PubMed:37295417, PubMed:37865089, PubMed:37989994). Binds calmodulin via its IQ domain. Interacts with TRPC1, TRPC2, TRPC5, but not TRPC3 (PubMed:15385169). Interacts with CFAP45 (By similarity).</text>
</comment>
<comment type="subcellular location">
    <subcellularLocation>
        <location evidence="1">Cytoplasm</location>
        <location evidence="1">Cytoskeleton</location>
        <location evidence="1">Cilium axoneme</location>
    </subcellularLocation>
    <subcellularLocation>
        <location evidence="7 8 9 10">Cytoplasm</location>
        <location evidence="7 8 9 10">Cytoskeleton</location>
        <location evidence="7 8 9 10">Flagellum axoneme</location>
    </subcellularLocation>
    <text evidence="6">Sperm acrosomal crescent and flagellar principal piece.</text>
</comment>
<comment type="tissue specificity">
    <text evidence="6">High expression in testis and vomeronasal organ and lower expression in ovary, heart, lung, and brain. Not expressed in other tissues.</text>
</comment>
<comment type="domain">
    <text evidence="6">The IQ motif is involved in calmodulin binding.</text>
</comment>
<sequence length="255" mass="29527">MDSPCTSESIYNLIPSDLKEPPQHPRYTSLFRATIKNDMKKFKTAMKTMGPAKVEIPSPKDFLKKHSKEKTLPPKKKFNRCSPKKPAVPLRTDHPVMGIQSGKNFINTNAADVIMGVAKKPKPIYVDKRTGDKHDLETSGLFPKYINKKDYGITPEYICKRNEDVKKAQEEYDNYIQENLKKAAMKRLSDEEREAVLQGLKKNWEEVHKEFQSLSVFIDSVPKKIRKQKLEKEMKQLEHDISVIEKHKIIYIANK</sequence>
<reference key="1">
    <citation type="journal article" date="2004" name="Dev. Biol.">
        <title>Enkurin is a novel calmodulin and TRPC channel binding protein in sperm.</title>
        <authorList>
            <person name="Sutton K.A."/>
            <person name="Jungnickel M.K."/>
            <person name="Wang Y."/>
            <person name="Cullen K."/>
            <person name="Lambert S."/>
            <person name="Florman H.M."/>
        </authorList>
    </citation>
    <scope>NUCLEOTIDE SEQUENCE [MRNA]</scope>
    <scope>FUNCTION</scope>
    <scope>SUBCELLULAR LOCATION</scope>
    <scope>INTERACTION WITH TRPC1; TRPC2 AND TRPC5</scope>
    <scope>TISSUE SPECIFICITY</scope>
    <source>
        <strain>CD-1</strain>
    </source>
</reference>
<reference evidence="13" key="2">
    <citation type="journal article" date="2023" name="Cell">
        <title>Structures of sperm flagellar doublet microtubules expand the genetic spectrum of male infertility.</title>
        <authorList>
            <person name="Zhou L."/>
            <person name="Liu H."/>
            <person name="Liu S."/>
            <person name="Yang X."/>
            <person name="Dong Y."/>
            <person name="Pan Y."/>
            <person name="Xiao Z."/>
            <person name="Zheng B."/>
            <person name="Sun Y."/>
            <person name="Huang P."/>
            <person name="Zhang X."/>
            <person name="Hu J."/>
            <person name="Sun R."/>
            <person name="Feng S."/>
            <person name="Zhu Y."/>
            <person name="Liu M."/>
            <person name="Gui M."/>
            <person name="Wu J."/>
        </authorList>
    </citation>
    <scope>STRUCTURE BY ELECTRON MICROSCOPY (3.50 ANGSTROMS) OF SPERM FLAGELLAR DOUBLET MICROTUBULES</scope>
    <scope>FUNCTION</scope>
    <scope>SUBCELLULAR LOCATION</scope>
    <scope>SUBUNIT</scope>
</reference>
<reference evidence="14" key="3">
    <citation type="journal article" date="2023" name="Cell">
        <title>De novo protein identification in mammalian sperm using in situ cryoelectron tomography and AlphaFold2 docking.</title>
        <authorList>
            <person name="Chen Z."/>
            <person name="Shiozaki M."/>
            <person name="Haas K.M."/>
            <person name="Skinner W.M."/>
            <person name="Zhao S."/>
            <person name="Guo C."/>
            <person name="Polacco B.J."/>
            <person name="Yu Z."/>
            <person name="Krogan N.J."/>
            <person name="Lishko P.V."/>
            <person name="Kaake R.M."/>
            <person name="Vale R.D."/>
            <person name="Agard D.A."/>
        </authorList>
    </citation>
    <scope>STRUCTURE BY ELECTRON MICROSCOPY (7.70 ANGSTROMS) OF SPERM FLAGELLAR DOUBLET MICROTUBULES</scope>
    <scope>FUNCTION</scope>
    <scope>SUBCELLULAR LOCATION</scope>
    <scope>SUBUNIT</scope>
</reference>
<reference evidence="11 12" key="4">
    <citation type="journal article" date="2023" name="Cell Discov.">
        <title>In-cell structural insight into the stability of sperm microtubule doublet.</title>
        <authorList>
            <person name="Tai L."/>
            <person name="Yin G."/>
            <person name="Huang X."/>
            <person name="Sun F."/>
            <person name="Zhu Y."/>
        </authorList>
    </citation>
    <scope>STRUCTURE BY ELECTRON MICROSCOPY (4.50 ANGSTROMS)</scope>
    <scope>FUNCTION</scope>
    <scope>SUBUNIT</scope>
    <scope>SUBCELLULAR LOCATION</scope>
</reference>
<keyword id="KW-0002">3D-structure</keyword>
<keyword id="KW-0112">Calmodulin-binding</keyword>
<keyword id="KW-0966">Cell projection</keyword>
<keyword id="KW-0969">Cilium</keyword>
<keyword id="KW-0963">Cytoplasm</keyword>
<keyword id="KW-0206">Cytoskeleton</keyword>
<keyword id="KW-0282">Flagellum</keyword>
<keyword id="KW-1185">Reference proteome</keyword>
<keyword id="KW-0729">SH3-binding</keyword>
<proteinExistence type="evidence at protein level"/>
<feature type="chain" id="PRO_0000086976" description="Enkurin">
    <location>
        <begin position="1"/>
        <end position="255"/>
    </location>
</feature>
<feature type="domain" description="Enkurin" evidence="4">
    <location>
        <begin position="160"/>
        <end position="252"/>
    </location>
</feature>
<feature type="domain" description="IQ">
    <location>
        <begin position="176"/>
        <end position="187"/>
    </location>
</feature>
<feature type="region of interest" description="Disordered" evidence="5">
    <location>
        <begin position="1"/>
        <end position="25"/>
    </location>
</feature>
<feature type="region of interest" description="Disordered" evidence="5">
    <location>
        <begin position="67"/>
        <end position="96"/>
    </location>
</feature>
<feature type="region of interest" description="Interaction with TRPC proteins" evidence="6">
    <location>
        <begin position="160"/>
        <end position="255"/>
    </location>
</feature>
<feature type="short sequence motif" description="SH3-binding" evidence="3">
    <location>
        <begin position="83"/>
        <end position="89"/>
    </location>
</feature>
<feature type="compositionally biased region" description="Polar residues" evidence="5">
    <location>
        <begin position="1"/>
        <end position="10"/>
    </location>
</feature>
<feature type="compositionally biased region" description="Basic residues" evidence="5">
    <location>
        <begin position="73"/>
        <end position="83"/>
    </location>
</feature>
<protein>
    <recommendedName>
        <fullName>Enkurin</fullName>
    </recommendedName>
</protein>
<accession>Q6SP97</accession>
<organism>
    <name type="scientific">Mus musculus</name>
    <name type="common">Mouse</name>
    <dbReference type="NCBI Taxonomy" id="10090"/>
    <lineage>
        <taxon>Eukaryota</taxon>
        <taxon>Metazoa</taxon>
        <taxon>Chordata</taxon>
        <taxon>Craniata</taxon>
        <taxon>Vertebrata</taxon>
        <taxon>Euteleostomi</taxon>
        <taxon>Mammalia</taxon>
        <taxon>Eutheria</taxon>
        <taxon>Euarchontoglires</taxon>
        <taxon>Glires</taxon>
        <taxon>Rodentia</taxon>
        <taxon>Myomorpha</taxon>
        <taxon>Muroidea</taxon>
        <taxon>Muridae</taxon>
        <taxon>Murinae</taxon>
        <taxon>Mus</taxon>
        <taxon>Mus</taxon>
    </lineage>
</organism>
<evidence type="ECO:0000250" key="1">
    <source>
        <dbReference type="UniProtKB" id="E1B836"/>
    </source>
</evidence>
<evidence type="ECO:0000250" key="2">
    <source>
        <dbReference type="UniProtKB" id="Q8TC29"/>
    </source>
</evidence>
<evidence type="ECO:0000255" key="3"/>
<evidence type="ECO:0000255" key="4">
    <source>
        <dbReference type="PROSITE-ProRule" id="PRU01000"/>
    </source>
</evidence>
<evidence type="ECO:0000256" key="5">
    <source>
        <dbReference type="SAM" id="MobiDB-lite"/>
    </source>
</evidence>
<evidence type="ECO:0000269" key="6">
    <source>
    </source>
</evidence>
<evidence type="ECO:0000269" key="7">
    <source>
    </source>
</evidence>
<evidence type="ECO:0000269" key="8">
    <source>
    </source>
</evidence>
<evidence type="ECO:0000269" key="9">
    <source>
    </source>
</evidence>
<evidence type="ECO:0000305" key="10">
    <source>
    </source>
</evidence>
<evidence type="ECO:0007744" key="11">
    <source>
        <dbReference type="PDB" id="8I7O"/>
    </source>
</evidence>
<evidence type="ECO:0007744" key="12">
    <source>
        <dbReference type="PDB" id="8I7R"/>
    </source>
</evidence>
<evidence type="ECO:0007744" key="13">
    <source>
        <dbReference type="PDB" id="8IYJ"/>
    </source>
</evidence>
<evidence type="ECO:0007744" key="14">
    <source>
        <dbReference type="PDB" id="8TO0"/>
    </source>
</evidence>
<gene>
    <name type="primary">Enkur</name>
</gene>